<gene>
    <name evidence="1" type="primary">kynA</name>
    <name type="ordered locus">XOO3850</name>
</gene>
<proteinExistence type="inferred from homology"/>
<keyword id="KW-0223">Dioxygenase</keyword>
<keyword id="KW-0349">Heme</keyword>
<keyword id="KW-0408">Iron</keyword>
<keyword id="KW-0479">Metal-binding</keyword>
<keyword id="KW-0560">Oxidoreductase</keyword>
<keyword id="KW-0823">Tryptophan catabolism</keyword>
<organism>
    <name type="scientific">Xanthomonas oryzae pv. oryzae (strain MAFF 311018)</name>
    <dbReference type="NCBI Taxonomy" id="342109"/>
    <lineage>
        <taxon>Bacteria</taxon>
        <taxon>Pseudomonadati</taxon>
        <taxon>Pseudomonadota</taxon>
        <taxon>Gammaproteobacteria</taxon>
        <taxon>Lysobacterales</taxon>
        <taxon>Lysobacteraceae</taxon>
        <taxon>Xanthomonas</taxon>
    </lineage>
</organism>
<comment type="function">
    <text evidence="1">Heme-dependent dioxygenase that catalyzes the oxidative cleavage of the L-tryptophan (L-Trp) pyrrole ring and converts L-tryptophan to N-formyl-L-kynurenine. Catalyzes the oxidative cleavage of the indole moiety.</text>
</comment>
<comment type="catalytic activity">
    <reaction evidence="1">
        <text>L-tryptophan + O2 = N-formyl-L-kynurenine</text>
        <dbReference type="Rhea" id="RHEA:24536"/>
        <dbReference type="ChEBI" id="CHEBI:15379"/>
        <dbReference type="ChEBI" id="CHEBI:57912"/>
        <dbReference type="ChEBI" id="CHEBI:58629"/>
        <dbReference type="EC" id="1.13.11.11"/>
    </reaction>
</comment>
<comment type="cofactor">
    <cofactor evidence="1">
        <name>heme</name>
        <dbReference type="ChEBI" id="CHEBI:30413"/>
    </cofactor>
    <text evidence="1">Binds 1 heme group per subunit.</text>
</comment>
<comment type="pathway">
    <text evidence="1">Amino-acid degradation; L-tryptophan degradation via kynurenine pathway; L-kynurenine from L-tryptophan: step 1/2.</text>
</comment>
<comment type="subunit">
    <text evidence="1">Homotetramer.</text>
</comment>
<comment type="similarity">
    <text evidence="1">Belongs to the tryptophan 2,3-dioxygenase family.</text>
</comment>
<sequence>MPVDKNLRDLEPGIHTDLEGRLTYGGYLRLDQLLSAQQPLSEPAHHDEMLFIIQHQTSELWLKLLAHELRAAIVHLQHDEVWQCRKVLARSKQVLRQLTEQWSVLETLTPSEYMGFRDVLGPSSGFQSLQYRYIEFLLGNKNPQVLQVFAYDPQGRARLREVLEAPSLYEEFLRYLARFGHAIPQQYHARDWTVAHVADDTLRPVFERIYENTDRYWREYALCEDLVDVETQFQLWRFRHMRTVMRVIGFKRGTGGSSGVGFLQQALALTFFPELFDVRTSVGVDSRPPQGAADTQG</sequence>
<dbReference type="EC" id="1.13.11.11" evidence="1"/>
<dbReference type="EMBL" id="AP008229">
    <property type="protein sequence ID" value="BAE70605.1"/>
    <property type="molecule type" value="Genomic_DNA"/>
</dbReference>
<dbReference type="RefSeq" id="WP_011260428.1">
    <property type="nucleotide sequence ID" value="NC_007705.1"/>
</dbReference>
<dbReference type="SMR" id="Q2NYM2"/>
<dbReference type="KEGG" id="xom:XOO3850"/>
<dbReference type="HOGENOM" id="CLU_063240_0_0_6"/>
<dbReference type="UniPathway" id="UPA00333">
    <property type="reaction ID" value="UER00453"/>
</dbReference>
<dbReference type="GO" id="GO:0020037">
    <property type="term" value="F:heme binding"/>
    <property type="evidence" value="ECO:0000250"/>
    <property type="project" value="UniProtKB"/>
</dbReference>
<dbReference type="GO" id="GO:0046872">
    <property type="term" value="F:metal ion binding"/>
    <property type="evidence" value="ECO:0007669"/>
    <property type="project" value="UniProtKB-KW"/>
</dbReference>
<dbReference type="GO" id="GO:0004833">
    <property type="term" value="F:tryptophan 2,3-dioxygenase activity"/>
    <property type="evidence" value="ECO:0000250"/>
    <property type="project" value="UniProtKB"/>
</dbReference>
<dbReference type="GO" id="GO:0019442">
    <property type="term" value="P:L-tryptophan catabolic process to acetyl-CoA"/>
    <property type="evidence" value="ECO:0007669"/>
    <property type="project" value="TreeGrafter"/>
</dbReference>
<dbReference type="GO" id="GO:0019441">
    <property type="term" value="P:L-tryptophan catabolic process to kynurenine"/>
    <property type="evidence" value="ECO:0000250"/>
    <property type="project" value="UniProtKB"/>
</dbReference>
<dbReference type="FunFam" id="1.20.58.480:FF:000001">
    <property type="entry name" value="Tryptophan 2,3-dioxygenase"/>
    <property type="match status" value="1"/>
</dbReference>
<dbReference type="Gene3D" id="1.20.58.480">
    <property type="match status" value="1"/>
</dbReference>
<dbReference type="HAMAP" id="MF_01972">
    <property type="entry name" value="T23O"/>
    <property type="match status" value="1"/>
</dbReference>
<dbReference type="InterPro" id="IPR037217">
    <property type="entry name" value="Trp/Indoleamine_2_3_dOase-like"/>
</dbReference>
<dbReference type="InterPro" id="IPR004981">
    <property type="entry name" value="Trp_2_3_dOase"/>
</dbReference>
<dbReference type="PANTHER" id="PTHR10138">
    <property type="entry name" value="TRYPTOPHAN 2,3-DIOXYGENASE"/>
    <property type="match status" value="1"/>
</dbReference>
<dbReference type="PANTHER" id="PTHR10138:SF0">
    <property type="entry name" value="TRYPTOPHAN 2,3-DIOXYGENASE"/>
    <property type="match status" value="1"/>
</dbReference>
<dbReference type="Pfam" id="PF03301">
    <property type="entry name" value="Trp_dioxygenase"/>
    <property type="match status" value="2"/>
</dbReference>
<dbReference type="SUPFAM" id="SSF140959">
    <property type="entry name" value="Indolic compounds 2,3-dioxygenase-like"/>
    <property type="match status" value="1"/>
</dbReference>
<reference key="1">
    <citation type="journal article" date="2005" name="Jpn. Agric. Res. Q.">
        <title>Genome sequence of Xanthomonas oryzae pv. oryzae suggests contribution of large numbers of effector genes and insertion sequences to its race diversity.</title>
        <authorList>
            <person name="Ochiai H."/>
            <person name="Inoue Y."/>
            <person name="Takeya M."/>
            <person name="Sasaki A."/>
            <person name="Kaku H."/>
        </authorList>
    </citation>
    <scope>NUCLEOTIDE SEQUENCE [LARGE SCALE GENOMIC DNA]</scope>
    <source>
        <strain>MAFF 311018</strain>
    </source>
</reference>
<name>T23O_XANOM</name>
<evidence type="ECO:0000255" key="1">
    <source>
        <dbReference type="HAMAP-Rule" id="MF_01972"/>
    </source>
</evidence>
<accession>Q2NYM2</accession>
<feature type="chain" id="PRO_0000360144" description="Tryptophan 2,3-dioxygenase">
    <location>
        <begin position="1"/>
        <end position="297"/>
    </location>
</feature>
<feature type="binding site" evidence="1">
    <location>
        <begin position="51"/>
        <end position="55"/>
    </location>
    <ligand>
        <name>substrate</name>
    </ligand>
</feature>
<feature type="binding site" evidence="1">
    <location>
        <position position="113"/>
    </location>
    <ligand>
        <name>substrate</name>
    </ligand>
</feature>
<feature type="binding site" evidence="1">
    <location>
        <position position="117"/>
    </location>
    <ligand>
        <name>substrate</name>
    </ligand>
</feature>
<feature type="binding site" description="axial binding residue" evidence="1">
    <location>
        <position position="240"/>
    </location>
    <ligand>
        <name>heme</name>
        <dbReference type="ChEBI" id="CHEBI:30413"/>
    </ligand>
    <ligandPart>
        <name>Fe</name>
        <dbReference type="ChEBI" id="CHEBI:18248"/>
    </ligandPart>
</feature>
<feature type="binding site" evidence="1">
    <location>
        <position position="254"/>
    </location>
    <ligand>
        <name>substrate</name>
    </ligand>
</feature>
<protein>
    <recommendedName>
        <fullName evidence="1">Tryptophan 2,3-dioxygenase</fullName>
        <shortName evidence="1">TDO</shortName>
        <ecNumber evidence="1">1.13.11.11</ecNumber>
    </recommendedName>
    <alternativeName>
        <fullName evidence="1">Tryptamin 2,3-dioxygenase</fullName>
    </alternativeName>
    <alternativeName>
        <fullName evidence="1">Tryptophan oxygenase</fullName>
        <shortName evidence="1">TO</shortName>
        <shortName evidence="1">TRPO</shortName>
    </alternativeName>
    <alternativeName>
        <fullName evidence="1">Tryptophan pyrrolase</fullName>
    </alternativeName>
    <alternativeName>
        <fullName evidence="1">Tryptophanase</fullName>
    </alternativeName>
</protein>